<dbReference type="EMBL" id="CH981524">
    <property type="protein sequence ID" value="EDK41929.1"/>
    <property type="molecule type" value="Genomic_DNA"/>
</dbReference>
<dbReference type="RefSeq" id="XP_001527587.1">
    <property type="nucleotide sequence ID" value="XM_001527537.1"/>
</dbReference>
<dbReference type="SMR" id="A5DRX1"/>
<dbReference type="STRING" id="379508.A5DRX1"/>
<dbReference type="GeneID" id="5235945"/>
<dbReference type="KEGG" id="lel:PVL30_000103"/>
<dbReference type="VEuPathDB" id="FungiDB:LELG_00107"/>
<dbReference type="eggNOG" id="KOG4020">
    <property type="taxonomic scope" value="Eukaryota"/>
</dbReference>
<dbReference type="HOGENOM" id="CLU_067152_0_1_1"/>
<dbReference type="InParanoid" id="A5DRX1"/>
<dbReference type="OrthoDB" id="311633at2759"/>
<dbReference type="Proteomes" id="UP000001996">
    <property type="component" value="Unassembled WGS sequence"/>
</dbReference>
<dbReference type="GO" id="GO:0005758">
    <property type="term" value="C:mitochondrial intermembrane space"/>
    <property type="evidence" value="ECO:0007669"/>
    <property type="project" value="UniProtKB-SubCell"/>
</dbReference>
<dbReference type="GO" id="GO:0051536">
    <property type="term" value="F:iron-sulfur cluster binding"/>
    <property type="evidence" value="ECO:0007669"/>
    <property type="project" value="UniProtKB-KW"/>
</dbReference>
<dbReference type="GO" id="GO:0046872">
    <property type="term" value="F:metal ion binding"/>
    <property type="evidence" value="ECO:0007669"/>
    <property type="project" value="UniProtKB-KW"/>
</dbReference>
<dbReference type="Gene3D" id="3.40.50.11000">
    <property type="entry name" value="Fe-S cluster assembly protein Dre2, N-terminal domain"/>
    <property type="match status" value="1"/>
</dbReference>
<dbReference type="InterPro" id="IPR031838">
    <property type="entry name" value="Dre2_N"/>
</dbReference>
<dbReference type="Pfam" id="PF16803">
    <property type="entry name" value="DRE2_N"/>
    <property type="match status" value="1"/>
</dbReference>
<sequence length="313" mass="34790">MTLRILLLLHPTVVSDQNLVESVKSKISAEHPNHSLDQQIINRITQGDVVLSNNTYDEIHYINPNDSQYLEMPILLIKLLNDLLTHDGVLRGDLPKDQNLDALMQGFVVGDDGSWIKPKPVETVLLLKKKKESNITSNSNNNDSSPREVGVNNTGNYTHAAMSTLASKKKIPMFKKLLDRSNEVKGNLASGTVKSPSPGLTDTSAQNTDEENENGNSMKRKLVETKLTYFSDSDSDNNEGRDLDDDDDDGQEDNDIYINENDLISELKSDNLIIPKKCELPQWGKGAERHVRTVRVGLKGVVKEAGAFRRQSG</sequence>
<accession>A5DRX1</accession>
<name>DRE2_LODEL</name>
<feature type="chain" id="PRO_0000392392" description="Fe-S cluster assembly protein DRE2">
    <location>
        <begin position="1"/>
        <end position="313"/>
    </location>
</feature>
<feature type="region of interest" description="N-terminal SAM-like domain" evidence="1">
    <location>
        <begin position="1"/>
        <end position="184"/>
    </location>
</feature>
<feature type="region of interest" description="Disordered" evidence="2">
    <location>
        <begin position="134"/>
        <end position="155"/>
    </location>
</feature>
<feature type="region of interest" description="Linker" evidence="1">
    <location>
        <begin position="185"/>
        <end position="270"/>
    </location>
</feature>
<feature type="region of interest" description="Disordered" evidence="2">
    <location>
        <begin position="187"/>
        <end position="254"/>
    </location>
</feature>
<feature type="region of interest" description="Disordered" evidence="1">
    <location>
        <begin position="271"/>
        <end position="313"/>
    </location>
</feature>
<feature type="compositionally biased region" description="Low complexity" evidence="2">
    <location>
        <begin position="134"/>
        <end position="144"/>
    </location>
</feature>
<feature type="compositionally biased region" description="Polar residues" evidence="2">
    <location>
        <begin position="189"/>
        <end position="207"/>
    </location>
</feature>
<feature type="compositionally biased region" description="Acidic residues" evidence="2">
    <location>
        <begin position="233"/>
        <end position="254"/>
    </location>
</feature>
<reference key="1">
    <citation type="journal article" date="2009" name="Nature">
        <title>Evolution of pathogenicity and sexual reproduction in eight Candida genomes.</title>
        <authorList>
            <person name="Butler G."/>
            <person name="Rasmussen M.D."/>
            <person name="Lin M.F."/>
            <person name="Santos M.A.S."/>
            <person name="Sakthikumar S."/>
            <person name="Munro C.A."/>
            <person name="Rheinbay E."/>
            <person name="Grabherr M."/>
            <person name="Forche A."/>
            <person name="Reedy J.L."/>
            <person name="Agrafioti I."/>
            <person name="Arnaud M.B."/>
            <person name="Bates S."/>
            <person name="Brown A.J.P."/>
            <person name="Brunke S."/>
            <person name="Costanzo M.C."/>
            <person name="Fitzpatrick D.A."/>
            <person name="de Groot P.W.J."/>
            <person name="Harris D."/>
            <person name="Hoyer L.L."/>
            <person name="Hube B."/>
            <person name="Klis F.M."/>
            <person name="Kodira C."/>
            <person name="Lennard N."/>
            <person name="Logue M.E."/>
            <person name="Martin R."/>
            <person name="Neiman A.M."/>
            <person name="Nikolaou E."/>
            <person name="Quail M.A."/>
            <person name="Quinn J."/>
            <person name="Santos M.C."/>
            <person name="Schmitzberger F.F."/>
            <person name="Sherlock G."/>
            <person name="Shah P."/>
            <person name="Silverstein K.A.T."/>
            <person name="Skrzypek M.S."/>
            <person name="Soll D."/>
            <person name="Staggs R."/>
            <person name="Stansfield I."/>
            <person name="Stumpf M.P.H."/>
            <person name="Sudbery P.E."/>
            <person name="Srikantha T."/>
            <person name="Zeng Q."/>
            <person name="Berman J."/>
            <person name="Berriman M."/>
            <person name="Heitman J."/>
            <person name="Gow N.A.R."/>
            <person name="Lorenz M.C."/>
            <person name="Birren B.W."/>
            <person name="Kellis M."/>
            <person name="Cuomo C.A."/>
        </authorList>
    </citation>
    <scope>NUCLEOTIDE SEQUENCE [LARGE SCALE GENOMIC DNA]</scope>
    <source>
        <strain>ATCC 11503 / BCRC 21390 / CBS 2605 / JCM 1781 / NBRC 1676 / NRRL YB-4239</strain>
    </source>
</reference>
<gene>
    <name type="primary">DRE2</name>
    <name type="ORF">LELG_00107</name>
</gene>
<comment type="function">
    <text evidence="1">Component of the cytosolic iron-sulfur (Fe-S) protein assembly (CIA) machinery required for the maturation of extramitochondrial Fe-S proteins. Part of an electron transfer chain functioning in an early step of cytosolic Fe-S biogenesis, facilitating the de novo assembly of a [4Fe-4S] cluster on the scaffold complex CFD1-NBP35. Electrons are transferred to DRE2 from NADPH via the FAD- and FMN-containing protein TAH18. TAH18-DRE2 are also required for the assembly of the diferric tyrosyl radical cofactor of ribonucleotide reductase (RNR), probably by providing electrons for reduction during radical cofactor maturation in the catalytic small subunit RNR2.</text>
</comment>
<comment type="subunit">
    <text evidence="1">Monomer. Interacts with TAH18. Interacts with MIA40.</text>
</comment>
<comment type="subcellular location">
    <subcellularLocation>
        <location evidence="1">Cytoplasm</location>
    </subcellularLocation>
    <subcellularLocation>
        <location evidence="1">Mitochondrion intermembrane space</location>
    </subcellularLocation>
</comment>
<comment type="domain">
    <text evidence="1">The C-terminal domain binds 2 Fe-S clusters but is otherwise mostly in an intrinsically disordered conformation.</text>
</comment>
<comment type="domain">
    <text evidence="1">The N-terminal domain has structural similarity with S-adenosyl-L-methionine-dependent methyltransferases, but does not bind S-adenosyl-L-methionine. It is required for correct assembly of the 2 Fe-S clusters.</text>
</comment>
<comment type="similarity">
    <text evidence="3">Belongs to the anamorsin family.</text>
</comment>
<evidence type="ECO:0000250" key="1">
    <source>
        <dbReference type="UniProtKB" id="P36152"/>
    </source>
</evidence>
<evidence type="ECO:0000256" key="2">
    <source>
        <dbReference type="SAM" id="MobiDB-lite"/>
    </source>
</evidence>
<evidence type="ECO:0000305" key="3"/>
<proteinExistence type="inferred from homology"/>
<protein>
    <recommendedName>
        <fullName>Fe-S cluster assembly protein DRE2</fullName>
    </recommendedName>
    <alternativeName>
        <fullName>Anamorsin homolog</fullName>
    </alternativeName>
</protein>
<keyword id="KW-0963">Cytoplasm</keyword>
<keyword id="KW-0408">Iron</keyword>
<keyword id="KW-0411">Iron-sulfur</keyword>
<keyword id="KW-0479">Metal-binding</keyword>
<keyword id="KW-0496">Mitochondrion</keyword>
<keyword id="KW-1185">Reference proteome</keyword>
<organism>
    <name type="scientific">Lodderomyces elongisporus (strain ATCC 11503 / CBS 2605 / JCM 1781 / NBRC 1676 / NRRL YB-4239)</name>
    <name type="common">Yeast</name>
    <name type="synonym">Saccharomyces elongisporus</name>
    <dbReference type="NCBI Taxonomy" id="379508"/>
    <lineage>
        <taxon>Eukaryota</taxon>
        <taxon>Fungi</taxon>
        <taxon>Dikarya</taxon>
        <taxon>Ascomycota</taxon>
        <taxon>Saccharomycotina</taxon>
        <taxon>Pichiomycetes</taxon>
        <taxon>Debaryomycetaceae</taxon>
        <taxon>Candida/Lodderomyces clade</taxon>
        <taxon>Lodderomyces</taxon>
    </lineage>
</organism>